<comment type="catalytic activity">
    <reaction evidence="1">
        <text>sn-glycerol 3-phosphate + an acyl-CoA = a 1-acyl-sn-glycero-3-phosphate + CoA</text>
        <dbReference type="Rhea" id="RHEA:15325"/>
        <dbReference type="ChEBI" id="CHEBI:57287"/>
        <dbReference type="ChEBI" id="CHEBI:57597"/>
        <dbReference type="ChEBI" id="CHEBI:57970"/>
        <dbReference type="ChEBI" id="CHEBI:58342"/>
        <dbReference type="EC" id="2.3.1.15"/>
    </reaction>
</comment>
<comment type="pathway">
    <text evidence="1">Phospholipid metabolism; CDP-diacylglycerol biosynthesis; CDP-diacylglycerol from sn-glycerol 3-phosphate: step 1/3.</text>
</comment>
<comment type="subcellular location">
    <subcellularLocation>
        <location evidence="1">Cell inner membrane</location>
        <topology evidence="1">Peripheral membrane protein</topology>
        <orientation evidence="1">Cytoplasmic side</orientation>
    </subcellularLocation>
</comment>
<comment type="domain">
    <text evidence="1">The HXXXXD motif is essential for acyltransferase activity and may constitute the binding site for the phosphate moiety of the glycerol-3-phosphate.</text>
</comment>
<comment type="similarity">
    <text evidence="1">Belongs to the GPAT/DAPAT family.</text>
</comment>
<reference key="1">
    <citation type="submission" date="2007-11" db="EMBL/GenBank/DDBJ databases">
        <authorList>
            <consortium name="The Salmonella enterica serovar Paratyphi B Genome Sequencing Project"/>
            <person name="McClelland M."/>
            <person name="Sanderson E.K."/>
            <person name="Porwollik S."/>
            <person name="Spieth J."/>
            <person name="Clifton W.S."/>
            <person name="Fulton R."/>
            <person name="Cordes M."/>
            <person name="Wollam A."/>
            <person name="Shah N."/>
            <person name="Pepin K."/>
            <person name="Bhonagiri V."/>
            <person name="Nash W."/>
            <person name="Johnson M."/>
            <person name="Thiruvilangam P."/>
            <person name="Wilson R."/>
        </authorList>
    </citation>
    <scope>NUCLEOTIDE SEQUENCE [LARGE SCALE GENOMIC DNA]</scope>
    <source>
        <strain>ATCC BAA-1250 / SPB7</strain>
    </source>
</reference>
<dbReference type="EC" id="2.3.1.15" evidence="1"/>
<dbReference type="EMBL" id="CP000886">
    <property type="protein sequence ID" value="ABX70495.1"/>
    <property type="molecule type" value="Genomic_DNA"/>
</dbReference>
<dbReference type="RefSeq" id="WP_000017356.1">
    <property type="nucleotide sequence ID" value="NC_010102.1"/>
</dbReference>
<dbReference type="SMR" id="A9N1L4"/>
<dbReference type="KEGG" id="spq:SPAB_05218"/>
<dbReference type="PATRIC" id="fig|1016998.12.peg.4887"/>
<dbReference type="HOGENOM" id="CLU_015407_0_0_6"/>
<dbReference type="BioCyc" id="SENT1016998:SPAB_RS21250-MONOMER"/>
<dbReference type="UniPathway" id="UPA00557">
    <property type="reaction ID" value="UER00612"/>
</dbReference>
<dbReference type="Proteomes" id="UP000008556">
    <property type="component" value="Chromosome"/>
</dbReference>
<dbReference type="GO" id="GO:0005886">
    <property type="term" value="C:plasma membrane"/>
    <property type="evidence" value="ECO:0007669"/>
    <property type="project" value="UniProtKB-SubCell"/>
</dbReference>
<dbReference type="GO" id="GO:0004366">
    <property type="term" value="F:glycerol-3-phosphate O-acyltransferase activity"/>
    <property type="evidence" value="ECO:0007669"/>
    <property type="project" value="UniProtKB-UniRule"/>
</dbReference>
<dbReference type="GO" id="GO:0016024">
    <property type="term" value="P:CDP-diacylglycerol biosynthetic process"/>
    <property type="evidence" value="ECO:0007669"/>
    <property type="project" value="UniProtKB-UniRule"/>
</dbReference>
<dbReference type="GO" id="GO:0006631">
    <property type="term" value="P:fatty acid metabolic process"/>
    <property type="evidence" value="ECO:0007669"/>
    <property type="project" value="TreeGrafter"/>
</dbReference>
<dbReference type="CDD" id="cd07993">
    <property type="entry name" value="LPLAT_DHAPAT-like"/>
    <property type="match status" value="1"/>
</dbReference>
<dbReference type="HAMAP" id="MF_00393">
    <property type="entry name" value="Glyc3P_acyltrans"/>
    <property type="match status" value="1"/>
</dbReference>
<dbReference type="InterPro" id="IPR022284">
    <property type="entry name" value="GPAT/DHAPAT"/>
</dbReference>
<dbReference type="InterPro" id="IPR045520">
    <property type="entry name" value="GPAT/DHAPAT_C"/>
</dbReference>
<dbReference type="InterPro" id="IPR041728">
    <property type="entry name" value="GPAT/DHAPAT_LPLAT"/>
</dbReference>
<dbReference type="InterPro" id="IPR028354">
    <property type="entry name" value="GPAT_PlsB"/>
</dbReference>
<dbReference type="InterPro" id="IPR002123">
    <property type="entry name" value="Plipid/glycerol_acylTrfase"/>
</dbReference>
<dbReference type="NCBIfam" id="TIGR03703">
    <property type="entry name" value="plsB"/>
    <property type="match status" value="1"/>
</dbReference>
<dbReference type="NCBIfam" id="NF003441">
    <property type="entry name" value="PRK04974.1"/>
    <property type="match status" value="1"/>
</dbReference>
<dbReference type="PANTHER" id="PTHR12563:SF17">
    <property type="entry name" value="DIHYDROXYACETONE PHOSPHATE ACYLTRANSFERASE"/>
    <property type="match status" value="1"/>
</dbReference>
<dbReference type="PANTHER" id="PTHR12563">
    <property type="entry name" value="GLYCEROL-3-PHOSPHATE ACYLTRANSFERASE"/>
    <property type="match status" value="1"/>
</dbReference>
<dbReference type="Pfam" id="PF01553">
    <property type="entry name" value="Acyltransferase"/>
    <property type="match status" value="1"/>
</dbReference>
<dbReference type="Pfam" id="PF19277">
    <property type="entry name" value="GPAT_C"/>
    <property type="match status" value="1"/>
</dbReference>
<dbReference type="PIRSF" id="PIRSF500064">
    <property type="entry name" value="GPAT"/>
    <property type="match status" value="1"/>
</dbReference>
<dbReference type="PIRSF" id="PIRSF000437">
    <property type="entry name" value="GPAT_DHAPAT"/>
    <property type="match status" value="1"/>
</dbReference>
<dbReference type="SMART" id="SM00563">
    <property type="entry name" value="PlsC"/>
    <property type="match status" value="1"/>
</dbReference>
<dbReference type="SUPFAM" id="SSF69593">
    <property type="entry name" value="Glycerol-3-phosphate (1)-acyltransferase"/>
    <property type="match status" value="1"/>
</dbReference>
<name>PLSB_SALPB</name>
<organism>
    <name type="scientific">Salmonella paratyphi B (strain ATCC BAA-1250 / SPB7)</name>
    <dbReference type="NCBI Taxonomy" id="1016998"/>
    <lineage>
        <taxon>Bacteria</taxon>
        <taxon>Pseudomonadati</taxon>
        <taxon>Pseudomonadota</taxon>
        <taxon>Gammaproteobacteria</taxon>
        <taxon>Enterobacterales</taxon>
        <taxon>Enterobacteriaceae</taxon>
        <taxon>Salmonella</taxon>
    </lineage>
</organism>
<accession>A9N1L4</accession>
<gene>
    <name evidence="1" type="primary">plsB</name>
    <name type="ordered locus">SPAB_05218</name>
</gene>
<keyword id="KW-0012">Acyltransferase</keyword>
<keyword id="KW-0997">Cell inner membrane</keyword>
<keyword id="KW-1003">Cell membrane</keyword>
<keyword id="KW-0444">Lipid biosynthesis</keyword>
<keyword id="KW-0443">Lipid metabolism</keyword>
<keyword id="KW-0472">Membrane</keyword>
<keyword id="KW-0594">Phospholipid biosynthesis</keyword>
<keyword id="KW-1208">Phospholipid metabolism</keyword>
<keyword id="KW-0808">Transferase</keyword>
<evidence type="ECO:0000255" key="1">
    <source>
        <dbReference type="HAMAP-Rule" id="MF_00393"/>
    </source>
</evidence>
<protein>
    <recommendedName>
        <fullName evidence="1">Glycerol-3-phosphate acyltransferase</fullName>
        <shortName evidence="1">GPAT</shortName>
        <ecNumber evidence="1">2.3.1.15</ecNumber>
    </recommendedName>
</protein>
<feature type="chain" id="PRO_1000080290" description="Glycerol-3-phosphate acyltransferase">
    <location>
        <begin position="1"/>
        <end position="806"/>
    </location>
</feature>
<feature type="short sequence motif" description="HXXXXD motif">
    <location>
        <begin position="305"/>
        <end position="310"/>
    </location>
</feature>
<sequence length="806" mass="91209">MSGWPRIYYKLLNLPLSILVKSKSIPAEPAQELGLDTSRPIMYVLPYNSKADLLTLRAQCLAHDLPDPLEPLEIDGALLPRYVFIHGGPRVFTYYTPKEESVKLFHDYLDLHRSNPALDVQMVPVSVMFGRAPGREKGEDNPPLRMLNGVQKFFAISWLGRDSFVRFSPSVSLRRMADEHGTDKIIAQKLARVARMHFARQRLAAVGPRLPARQDLFNKLLASKAIARAVEDEARSKKISHEKAQQNAIALMEEIAANFSYEMIRLTDRILGFTWNRLYQGINVHNAERVRQLAHDGHEIVYVPCHRSHMDYLLLSYVLYHQGLVPPHIAAGINLNFWPAGPIFRRLGAFFIRRTFKGNKLYSTVFREYLGELFSRGYSVEYFVEGGRSRTGRLLDPKTGTLSMTIQAMLRGGTRPITLVPIYIGYEHVMEVGTYAKELRGATKEKESLPQMLKGLSKLRNLGQGYVNFGEPMPLMTYLNQHVPEWRESIDPIEAIRPAWLTPTVNSIAADLMVRINNAGAANAMNLCCTALLASRQRSLTREQLTEQLDCYLDLMRNVPYSTDSTVPAASAGELIAHALQMNKFEVEKDTIGDIIILPREQAVLMTYYRNNIAHMLIMPSLMAAIITQHRRISRDALQQHVEALYPMLKAELFLRWEREELASVIDALASEIQRQGLITLQDDELHINPTHSRTLQLLAAGARETLQRYAITFWLLSANPSINRSTLEKESRTVAQRLSVLHGINAPEFFDKAVFSSLVLTLRDEGYISDTGDAEPAETMKIYQMLADLITSDVRLTIESATQGE</sequence>
<proteinExistence type="inferred from homology"/>